<name>FOSB_RAT</name>
<accession>D3ZLB7</accession>
<comment type="function">
    <text evidence="1 2">Heterodimerizes with proteins of the JUN family to form an AP-1 transcription factor complex, thereby enhancing their DNA binding activity to an AP-1 consensus sequence 5'-TGA[GC]TCA-3' and enhancing their transcriptional activity (By similarity). Exhibits transactivation activity in vitro (By similarity). As part of the AP-1 complex, facilitates enhancer selection together with cell-type-specific transcription factors by collaboratively binding to nucleosomal enhancers and recruiting the SWI/SNF (BAF) chromatin remodeling complex to establish accessible chromatin (By similarity). Together with JUN, plays a role in activation-induced cell death of T cells by binding to the AP-1 promoter site of FASLG/CD95L, and inducing its transcription in response to activation of the TCR/CD3 signaling pathway (By similarity). Involved in the display of nurturing behavior towards newborns (By similarity). May play a role in neurogenesis in the hippocampus and in learning and memory-related tasks by regulating the expression of various genes involved in neurogenesis, depression and epilepsy (By similarity). Implicated in behavioral responses related to morphine reward and spatial memory (By similarity).</text>
</comment>
<comment type="subunit">
    <text evidence="1">Heterodimer; binds to DNA as heterodimer (By similarity). Component of an AP-1 transcription factor complex; composed of FOS-JUN heterodimers (By similarity). As part of the AP-1 transcription factor complex, forms heterodimers with JUN, JUNB or JUND, thereby binding to the AP-1 consensus sequence and stimulating transcription (By similarity).</text>
</comment>
<comment type="subcellular location">
    <subcellularLocation>
        <location evidence="1">Nucleus</location>
    </subcellularLocation>
</comment>
<comment type="tissue specificity">
    <text evidence="5 6">Expressed in brain (PubMed:16687504). Expressed in pyramidal cells in CA1 and CA3, in the dentate gyrus and the nucleus accumbens (at protein level) (PubMed:26446228).</text>
</comment>
<comment type="induction">
    <text evidence="5 6">Induced by chronic electroconvulsive seizure (ECS) treatment (PubMed:16687504). Induced in the hippocampus by novelty exposure and spatial learning (PubMed:26446228).</text>
</comment>
<comment type="domain">
    <text evidence="2">Binds DNA via bZIP domain; DNA-binding is under control of cellular redox homeostasis (in vitro) (By similarity). To enable DNA binding, the bZIP domain must undergo a conformational rearrangement which requires the reduction of the interchain disulfide bond between FosB and JunD (in vitro) (By similarity). The bZIP domain is able to form homomeric oligomers via formation of interchain disulfide bonds under non-reducing conditions (in vitro) (By similarity). Under reducing conditions, the disulfide-bonded homomeric species dissociates into monomers (in vitro) (By similarity).</text>
</comment>
<comment type="PTM">
    <text evidence="5">Phosphorylated; phosphorylation is induced by chronic electroconvulsive seizure (ECS) treatment.</text>
</comment>
<comment type="similarity">
    <text evidence="7">Belongs to the bZIP family. Fos subfamily.</text>
</comment>
<evidence type="ECO:0000250" key="1">
    <source>
        <dbReference type="UniProtKB" id="P13346"/>
    </source>
</evidence>
<evidence type="ECO:0000250" key="2">
    <source>
        <dbReference type="UniProtKB" id="P53539"/>
    </source>
</evidence>
<evidence type="ECO:0000255" key="3">
    <source>
        <dbReference type="PROSITE-ProRule" id="PRU00978"/>
    </source>
</evidence>
<evidence type="ECO:0000256" key="4">
    <source>
        <dbReference type="SAM" id="MobiDB-lite"/>
    </source>
</evidence>
<evidence type="ECO:0000269" key="5">
    <source>
    </source>
</evidence>
<evidence type="ECO:0000269" key="6">
    <source>
    </source>
</evidence>
<evidence type="ECO:0000305" key="7"/>
<evidence type="ECO:0000312" key="8">
    <source>
        <dbReference type="EMBL" id="EDM08212.1"/>
    </source>
</evidence>
<evidence type="ECO:0000312" key="9">
    <source>
        <dbReference type="Proteomes" id="UP000002494"/>
    </source>
</evidence>
<evidence type="ECO:0000312" key="10">
    <source>
        <dbReference type="RGD" id="1308198"/>
    </source>
</evidence>
<protein>
    <recommendedName>
        <fullName evidence="7">Protein FosB</fullName>
    </recommendedName>
    <alternativeName>
        <fullName evidence="7">Transcription factor AP-1 subunit FosB</fullName>
    </alternativeName>
</protein>
<gene>
    <name evidence="10" type="primary">Fosb</name>
</gene>
<dbReference type="EMBL" id="AABR07002674">
    <property type="status" value="NOT_ANNOTATED_CDS"/>
    <property type="molecule type" value="Genomic_DNA"/>
</dbReference>
<dbReference type="EMBL" id="CH473979">
    <property type="protein sequence ID" value="EDM08212.1"/>
    <property type="molecule type" value="Genomic_DNA"/>
</dbReference>
<dbReference type="RefSeq" id="NP_001243438.1">
    <property type="nucleotide sequence ID" value="NM_001256509.1"/>
</dbReference>
<dbReference type="SMR" id="D3ZLB7"/>
<dbReference type="CORUM" id="D3ZLB7"/>
<dbReference type="FunCoup" id="D3ZLB7">
    <property type="interactions" value="431"/>
</dbReference>
<dbReference type="STRING" id="10116.ENSRNOP00000065427"/>
<dbReference type="GlyGen" id="D3ZLB7">
    <property type="glycosylation" value="1 site"/>
</dbReference>
<dbReference type="PhosphoSitePlus" id="D3ZLB7"/>
<dbReference type="PaxDb" id="10116-ENSRNOP00000065427"/>
<dbReference type="Ensembl" id="ENSRNOT00000072149.2">
    <property type="protein sequence ID" value="ENSRNOP00000065427.1"/>
    <property type="gene ID" value="ENSRNOG00000046667.3"/>
</dbReference>
<dbReference type="GeneID" id="100360880"/>
<dbReference type="KEGG" id="rno:100360880"/>
<dbReference type="UCSC" id="RGD:2321278">
    <property type="organism name" value="rat"/>
</dbReference>
<dbReference type="AGR" id="RGD:1308198"/>
<dbReference type="CTD" id="2354"/>
<dbReference type="RGD" id="1308198">
    <property type="gene designation" value="Fosb"/>
</dbReference>
<dbReference type="eggNOG" id="KOG1414">
    <property type="taxonomic scope" value="Eukaryota"/>
</dbReference>
<dbReference type="GeneTree" id="ENSGT00940000160358"/>
<dbReference type="HOGENOM" id="CLU_049742_0_0_1"/>
<dbReference type="InParanoid" id="D3ZLB7"/>
<dbReference type="OMA" id="GCKIPFA"/>
<dbReference type="OrthoDB" id="5866312at2759"/>
<dbReference type="PhylomeDB" id="D3ZLB7"/>
<dbReference type="TreeFam" id="TF326301"/>
<dbReference type="PRO" id="PR:D3ZLB7"/>
<dbReference type="Proteomes" id="UP000002494">
    <property type="component" value="Chromosome 1"/>
</dbReference>
<dbReference type="Proteomes" id="UP000234681">
    <property type="component" value="Chromosome 1"/>
</dbReference>
<dbReference type="Bgee" id="ENSRNOG00000046667">
    <property type="expression patterns" value="Expressed in jejunum and 15 other cell types or tissues"/>
</dbReference>
<dbReference type="ExpressionAtlas" id="D3ZLB7">
    <property type="expression patterns" value="baseline and differential"/>
</dbReference>
<dbReference type="GO" id="GO:0005829">
    <property type="term" value="C:cytosol"/>
    <property type="evidence" value="ECO:0000314"/>
    <property type="project" value="RGD"/>
</dbReference>
<dbReference type="GO" id="GO:0005654">
    <property type="term" value="C:nucleoplasm"/>
    <property type="evidence" value="ECO:0000304"/>
    <property type="project" value="Reactome"/>
</dbReference>
<dbReference type="GO" id="GO:0005634">
    <property type="term" value="C:nucleus"/>
    <property type="evidence" value="ECO:0000314"/>
    <property type="project" value="RGD"/>
</dbReference>
<dbReference type="GO" id="GO:0003677">
    <property type="term" value="F:DNA binding"/>
    <property type="evidence" value="ECO:0000266"/>
    <property type="project" value="RGD"/>
</dbReference>
<dbReference type="GO" id="GO:0001228">
    <property type="term" value="F:DNA-binding transcription activator activity, RNA polymerase II-specific"/>
    <property type="evidence" value="ECO:0000266"/>
    <property type="project" value="RGD"/>
</dbReference>
<dbReference type="GO" id="GO:0003700">
    <property type="term" value="F:DNA-binding transcription factor activity"/>
    <property type="evidence" value="ECO:0000315"/>
    <property type="project" value="RGD"/>
</dbReference>
<dbReference type="GO" id="GO:0000981">
    <property type="term" value="F:DNA-binding transcription factor activity, RNA polymerase II-specific"/>
    <property type="evidence" value="ECO:0000318"/>
    <property type="project" value="GO_Central"/>
</dbReference>
<dbReference type="GO" id="GO:0003690">
    <property type="term" value="F:double-stranded DNA binding"/>
    <property type="evidence" value="ECO:0000314"/>
    <property type="project" value="RGD"/>
</dbReference>
<dbReference type="GO" id="GO:0000978">
    <property type="term" value="F:RNA polymerase II cis-regulatory region sequence-specific DNA binding"/>
    <property type="evidence" value="ECO:0000266"/>
    <property type="project" value="RGD"/>
</dbReference>
<dbReference type="GO" id="GO:0043565">
    <property type="term" value="F:sequence-specific DNA binding"/>
    <property type="evidence" value="ECO:0000314"/>
    <property type="project" value="RGD"/>
</dbReference>
<dbReference type="GO" id="GO:1990837">
    <property type="term" value="F:sequence-specific double-stranded DNA binding"/>
    <property type="evidence" value="ECO:0000266"/>
    <property type="project" value="RGD"/>
</dbReference>
<dbReference type="GO" id="GO:0048148">
    <property type="term" value="P:behavioral response to cocaine"/>
    <property type="evidence" value="ECO:0000270"/>
    <property type="project" value="RGD"/>
</dbReference>
<dbReference type="GO" id="GO:0071277">
    <property type="term" value="P:cellular response to calcium ion"/>
    <property type="evidence" value="ECO:0000266"/>
    <property type="project" value="RGD"/>
</dbReference>
<dbReference type="GO" id="GO:0032870">
    <property type="term" value="P:cellular response to hormone stimulus"/>
    <property type="evidence" value="ECO:0000270"/>
    <property type="project" value="RGD"/>
</dbReference>
<dbReference type="GO" id="GO:0007565">
    <property type="term" value="P:female pregnancy"/>
    <property type="evidence" value="ECO:0000270"/>
    <property type="project" value="RGD"/>
</dbReference>
<dbReference type="GO" id="GO:0045944">
    <property type="term" value="P:positive regulation of transcription by RNA polymerase II"/>
    <property type="evidence" value="ECO:0000266"/>
    <property type="project" value="RGD"/>
</dbReference>
<dbReference type="GO" id="GO:0006357">
    <property type="term" value="P:regulation of transcription by RNA polymerase II"/>
    <property type="evidence" value="ECO:0000318"/>
    <property type="project" value="GO_Central"/>
</dbReference>
<dbReference type="GO" id="GO:0001975">
    <property type="term" value="P:response to amphetamine"/>
    <property type="evidence" value="ECO:0000270"/>
    <property type="project" value="RGD"/>
</dbReference>
<dbReference type="GO" id="GO:0051591">
    <property type="term" value="P:response to cAMP"/>
    <property type="evidence" value="ECO:0000270"/>
    <property type="project" value="RGD"/>
</dbReference>
<dbReference type="GO" id="GO:0042220">
    <property type="term" value="P:response to cocaine"/>
    <property type="evidence" value="ECO:0000270"/>
    <property type="project" value="RGD"/>
</dbReference>
<dbReference type="GO" id="GO:0051412">
    <property type="term" value="P:response to corticosterone"/>
    <property type="evidence" value="ECO:0000270"/>
    <property type="project" value="RGD"/>
</dbReference>
<dbReference type="GO" id="GO:0045471">
    <property type="term" value="P:response to ethanol"/>
    <property type="evidence" value="ECO:0000270"/>
    <property type="project" value="RGD"/>
</dbReference>
<dbReference type="GO" id="GO:0009612">
    <property type="term" value="P:response to mechanical stimulus"/>
    <property type="evidence" value="ECO:0000270"/>
    <property type="project" value="RGD"/>
</dbReference>
<dbReference type="GO" id="GO:0043278">
    <property type="term" value="P:response to morphine"/>
    <property type="evidence" value="ECO:0000270"/>
    <property type="project" value="RGD"/>
</dbReference>
<dbReference type="GO" id="GO:0035094">
    <property type="term" value="P:response to nicotine"/>
    <property type="evidence" value="ECO:0000270"/>
    <property type="project" value="RGD"/>
</dbReference>
<dbReference type="GO" id="GO:0032570">
    <property type="term" value="P:response to progesterone"/>
    <property type="evidence" value="ECO:0000270"/>
    <property type="project" value="RGD"/>
</dbReference>
<dbReference type="GO" id="GO:0009410">
    <property type="term" value="P:response to xenobiotic stimulus"/>
    <property type="evidence" value="ECO:0000270"/>
    <property type="project" value="RGD"/>
</dbReference>
<dbReference type="GO" id="GO:0006366">
    <property type="term" value="P:transcription by RNA polymerase II"/>
    <property type="evidence" value="ECO:0000315"/>
    <property type="project" value="RGD"/>
</dbReference>
<dbReference type="CDD" id="cd14721">
    <property type="entry name" value="bZIP_Fos"/>
    <property type="match status" value="1"/>
</dbReference>
<dbReference type="FunFam" id="1.20.5.170:FF:000006">
    <property type="entry name" value="fos-related antigen 2 isoform X1"/>
    <property type="match status" value="1"/>
</dbReference>
<dbReference type="Gene3D" id="1.20.5.170">
    <property type="match status" value="1"/>
</dbReference>
<dbReference type="InterPro" id="IPR000837">
    <property type="entry name" value="AP-1"/>
</dbReference>
<dbReference type="InterPro" id="IPR004827">
    <property type="entry name" value="bZIP"/>
</dbReference>
<dbReference type="InterPro" id="IPR046347">
    <property type="entry name" value="bZIP_sf"/>
</dbReference>
<dbReference type="PANTHER" id="PTHR23351">
    <property type="entry name" value="FOS TRANSCRIPTION FACTOR-RELATED"/>
    <property type="match status" value="1"/>
</dbReference>
<dbReference type="PANTHER" id="PTHR23351:SF3">
    <property type="entry name" value="PROTEIN FOSB"/>
    <property type="match status" value="1"/>
</dbReference>
<dbReference type="Pfam" id="PF00170">
    <property type="entry name" value="bZIP_1"/>
    <property type="match status" value="1"/>
</dbReference>
<dbReference type="PRINTS" id="PR00042">
    <property type="entry name" value="LEUZIPPRFOS"/>
</dbReference>
<dbReference type="SMART" id="SM00338">
    <property type="entry name" value="BRLZ"/>
    <property type="match status" value="1"/>
</dbReference>
<dbReference type="SUPFAM" id="SSF57959">
    <property type="entry name" value="Leucine zipper domain"/>
    <property type="match status" value="1"/>
</dbReference>
<dbReference type="PROSITE" id="PS50217">
    <property type="entry name" value="BZIP"/>
    <property type="match status" value="1"/>
</dbReference>
<dbReference type="PROSITE" id="PS00036">
    <property type="entry name" value="BZIP_BASIC"/>
    <property type="match status" value="1"/>
</dbReference>
<keyword id="KW-1015">Disulfide bond</keyword>
<keyword id="KW-0539">Nucleus</keyword>
<keyword id="KW-0597">Phosphoprotein</keyword>
<keyword id="KW-1185">Reference proteome</keyword>
<reference evidence="9" key="1">
    <citation type="journal article" date="2004" name="Nature">
        <title>Genome sequence of the Brown Norway rat yields insights into mammalian evolution.</title>
        <authorList>
            <person name="Gibbs R.A."/>
            <person name="Weinstock G.M."/>
            <person name="Metzker M.L."/>
            <person name="Muzny D.M."/>
            <person name="Sodergren E.J."/>
            <person name="Scherer S."/>
            <person name="Scott G."/>
            <person name="Steffen D."/>
            <person name="Worley K.C."/>
            <person name="Burch P.E."/>
            <person name="Okwuonu G."/>
            <person name="Hines S."/>
            <person name="Lewis L."/>
            <person name="Deramo C."/>
            <person name="Delgado O."/>
            <person name="Dugan-Rocha S."/>
            <person name="Miner G."/>
            <person name="Morgan M."/>
            <person name="Hawes A."/>
            <person name="Gill R."/>
            <person name="Holt R.A."/>
            <person name="Adams M.D."/>
            <person name="Amanatides P.G."/>
            <person name="Baden-Tillson H."/>
            <person name="Barnstead M."/>
            <person name="Chin S."/>
            <person name="Evans C.A."/>
            <person name="Ferriera S."/>
            <person name="Fosler C."/>
            <person name="Glodek A."/>
            <person name="Gu Z."/>
            <person name="Jennings D."/>
            <person name="Kraft C.L."/>
            <person name="Nguyen T."/>
            <person name="Pfannkoch C.M."/>
            <person name="Sitter C."/>
            <person name="Sutton G.G."/>
            <person name="Venter J.C."/>
            <person name="Woodage T."/>
            <person name="Smith D."/>
            <person name="Lee H.-M."/>
            <person name="Gustafson E."/>
            <person name="Cahill P."/>
            <person name="Kana A."/>
            <person name="Doucette-Stamm L."/>
            <person name="Weinstock K."/>
            <person name="Fechtel K."/>
            <person name="Weiss R.B."/>
            <person name="Dunn D.M."/>
            <person name="Green E.D."/>
            <person name="Blakesley R.W."/>
            <person name="Bouffard G.G."/>
            <person name="De Jong P.J."/>
            <person name="Osoegawa K."/>
            <person name="Zhu B."/>
            <person name="Marra M."/>
            <person name="Schein J."/>
            <person name="Bosdet I."/>
            <person name="Fjell C."/>
            <person name="Jones S."/>
            <person name="Krzywinski M."/>
            <person name="Mathewson C."/>
            <person name="Siddiqui A."/>
            <person name="Wye N."/>
            <person name="McPherson J."/>
            <person name="Zhao S."/>
            <person name="Fraser C.M."/>
            <person name="Shetty J."/>
            <person name="Shatsman S."/>
            <person name="Geer K."/>
            <person name="Chen Y."/>
            <person name="Abramzon S."/>
            <person name="Nierman W.C."/>
            <person name="Havlak P.H."/>
            <person name="Chen R."/>
            <person name="Durbin K.J."/>
            <person name="Egan A."/>
            <person name="Ren Y."/>
            <person name="Song X.-Z."/>
            <person name="Li B."/>
            <person name="Liu Y."/>
            <person name="Qin X."/>
            <person name="Cawley S."/>
            <person name="Cooney A.J."/>
            <person name="D'Souza L.M."/>
            <person name="Martin K."/>
            <person name="Wu J.Q."/>
            <person name="Gonzalez-Garay M.L."/>
            <person name="Jackson A.R."/>
            <person name="Kalafus K.J."/>
            <person name="McLeod M.P."/>
            <person name="Milosavljevic A."/>
            <person name="Virk D."/>
            <person name="Volkov A."/>
            <person name="Wheeler D.A."/>
            <person name="Zhang Z."/>
            <person name="Bailey J.A."/>
            <person name="Eichler E.E."/>
            <person name="Tuzun E."/>
            <person name="Birney E."/>
            <person name="Mongin E."/>
            <person name="Ureta-Vidal A."/>
            <person name="Woodwark C."/>
            <person name="Zdobnov E."/>
            <person name="Bork P."/>
            <person name="Suyama M."/>
            <person name="Torrents D."/>
            <person name="Alexandersson M."/>
            <person name="Trask B.J."/>
            <person name="Young J.M."/>
            <person name="Huang H."/>
            <person name="Wang H."/>
            <person name="Xing H."/>
            <person name="Daniels S."/>
            <person name="Gietzen D."/>
            <person name="Schmidt J."/>
            <person name="Stevens K."/>
            <person name="Vitt U."/>
            <person name="Wingrove J."/>
            <person name="Camara F."/>
            <person name="Mar Alba M."/>
            <person name="Abril J.F."/>
            <person name="Guigo R."/>
            <person name="Smit A."/>
            <person name="Dubchak I."/>
            <person name="Rubin E.M."/>
            <person name="Couronne O."/>
            <person name="Poliakov A."/>
            <person name="Huebner N."/>
            <person name="Ganten D."/>
            <person name="Goesele C."/>
            <person name="Hummel O."/>
            <person name="Kreitler T."/>
            <person name="Lee Y.-A."/>
            <person name="Monti J."/>
            <person name="Schulz H."/>
            <person name="Zimdahl H."/>
            <person name="Himmelbauer H."/>
            <person name="Lehrach H."/>
            <person name="Jacob H.J."/>
            <person name="Bromberg S."/>
            <person name="Gullings-Handley J."/>
            <person name="Jensen-Seaman M.I."/>
            <person name="Kwitek A.E."/>
            <person name="Lazar J."/>
            <person name="Pasko D."/>
            <person name="Tonellato P.J."/>
            <person name="Twigger S."/>
            <person name="Ponting C.P."/>
            <person name="Duarte J.M."/>
            <person name="Rice S."/>
            <person name="Goodstadt L."/>
            <person name="Beatson S.A."/>
            <person name="Emes R.D."/>
            <person name="Winter E.E."/>
            <person name="Webber C."/>
            <person name="Brandt P."/>
            <person name="Nyakatura G."/>
            <person name="Adetobi M."/>
            <person name="Chiaromonte F."/>
            <person name="Elnitski L."/>
            <person name="Eswara P."/>
            <person name="Hardison R.C."/>
            <person name="Hou M."/>
            <person name="Kolbe D."/>
            <person name="Makova K."/>
            <person name="Miller W."/>
            <person name="Nekrutenko A."/>
            <person name="Riemer C."/>
            <person name="Schwartz S."/>
            <person name="Taylor J."/>
            <person name="Yang S."/>
            <person name="Zhang Y."/>
            <person name="Lindpaintner K."/>
            <person name="Andrews T.D."/>
            <person name="Caccamo M."/>
            <person name="Clamp M."/>
            <person name="Clarke L."/>
            <person name="Curwen V."/>
            <person name="Durbin R.M."/>
            <person name="Eyras E."/>
            <person name="Searle S.M."/>
            <person name="Cooper G.M."/>
            <person name="Batzoglou S."/>
            <person name="Brudno M."/>
            <person name="Sidow A."/>
            <person name="Stone E.A."/>
            <person name="Payseur B.A."/>
            <person name="Bourque G."/>
            <person name="Lopez-Otin C."/>
            <person name="Puente X.S."/>
            <person name="Chakrabarti K."/>
            <person name="Chatterji S."/>
            <person name="Dewey C."/>
            <person name="Pachter L."/>
            <person name="Bray N."/>
            <person name="Yap V.B."/>
            <person name="Caspi A."/>
            <person name="Tesler G."/>
            <person name="Pevzner P.A."/>
            <person name="Haussler D."/>
            <person name="Roskin K.M."/>
            <person name="Baertsch R."/>
            <person name="Clawson H."/>
            <person name="Furey T.S."/>
            <person name="Hinrichs A.S."/>
            <person name="Karolchik D."/>
            <person name="Kent W.J."/>
            <person name="Rosenbloom K.R."/>
            <person name="Trumbower H."/>
            <person name="Weirauch M."/>
            <person name="Cooper D.N."/>
            <person name="Stenson P.D."/>
            <person name="Ma B."/>
            <person name="Brent M."/>
            <person name="Arumugam M."/>
            <person name="Shteynberg D."/>
            <person name="Copley R.R."/>
            <person name="Taylor M.S."/>
            <person name="Riethman H."/>
            <person name="Mudunuri U."/>
            <person name="Peterson J."/>
            <person name="Guyer M."/>
            <person name="Felsenfeld A."/>
            <person name="Old S."/>
            <person name="Mockrin S."/>
            <person name="Collins F.S."/>
        </authorList>
    </citation>
    <scope>NUCLEOTIDE SEQUENCE [LARGE SCALE GENOMIC DNA]</scope>
    <source>
        <strain evidence="9">Brown Norway</strain>
    </source>
</reference>
<reference evidence="8" key="2">
    <citation type="journal article" date="2005" name="Genome Res.">
        <title>Gene and alternative splicing annotation with AIR.</title>
        <authorList>
            <person name="Florea L."/>
            <person name="Di Francesco V."/>
            <person name="Miller J."/>
            <person name="Turner R."/>
            <person name="Yao A."/>
            <person name="Harris M."/>
            <person name="Walenz B."/>
            <person name="Mobarry C."/>
            <person name="Merkulov G.V."/>
            <person name="Charlab R."/>
            <person name="Dew I."/>
            <person name="Deng Z."/>
            <person name="Istrail S."/>
            <person name="Li P."/>
            <person name="Sutton G."/>
        </authorList>
    </citation>
    <scope>NUCLEOTIDE SEQUENCE [LARGE SCALE GENOMIC DNA]</scope>
    <source>
        <strain evidence="8">Brown Norway</strain>
    </source>
</reference>
<reference evidence="7" key="3">
    <citation type="journal article" date="2006" name="J. Neurosci.">
        <title>Regulation of DeltaFosB stability by phosphorylation.</title>
        <authorList>
            <person name="Ulery P.G."/>
            <person name="Rudenko G."/>
            <person name="Nestler E.J."/>
        </authorList>
    </citation>
    <scope>TISSUE SPECIFICITY</scope>
    <scope>INDUCTION BY ECS</scope>
    <scope>PHOSPHORYLATION</scope>
</reference>
<reference evidence="7" key="4">
    <citation type="journal article" date="2015" name="J. Neurosci.">
        <title>Experience-Dependent Induction of Hippocampal DeltaFosB Controls Learning.</title>
        <authorList>
            <person name="Eagle A.L."/>
            <person name="Gajewski P.A."/>
            <person name="Yang M."/>
            <person name="Kechner M.E."/>
            <person name="Al Masraf B.S."/>
            <person name="Kennedy P.J."/>
            <person name="Wang H."/>
            <person name="Mazei-Robison M.S."/>
            <person name="Robison A.J."/>
        </authorList>
    </citation>
    <scope>TISSUE SPECIFICITY</scope>
    <scope>INDUCTION BY NOVELTY EXPOSURE</scope>
</reference>
<organism evidence="9">
    <name type="scientific">Rattus norvegicus</name>
    <name type="common">Rat</name>
    <dbReference type="NCBI Taxonomy" id="10116"/>
    <lineage>
        <taxon>Eukaryota</taxon>
        <taxon>Metazoa</taxon>
        <taxon>Chordata</taxon>
        <taxon>Craniata</taxon>
        <taxon>Vertebrata</taxon>
        <taxon>Euteleostomi</taxon>
        <taxon>Mammalia</taxon>
        <taxon>Eutheria</taxon>
        <taxon>Euarchontoglires</taxon>
        <taxon>Glires</taxon>
        <taxon>Rodentia</taxon>
        <taxon>Myomorpha</taxon>
        <taxon>Muroidea</taxon>
        <taxon>Muridae</taxon>
        <taxon>Murinae</taxon>
        <taxon>Rattus</taxon>
    </lineage>
</organism>
<feature type="chain" id="PRO_0000454709" description="Protein FosB">
    <location>
        <begin position="1"/>
        <end position="338"/>
    </location>
</feature>
<feature type="domain" description="bZIP" evidence="3">
    <location>
        <begin position="155"/>
        <end position="218"/>
    </location>
</feature>
<feature type="region of interest" description="Disordered" evidence="4">
    <location>
        <begin position="1"/>
        <end position="54"/>
    </location>
</feature>
<feature type="region of interest" description="Disordered" evidence="4">
    <location>
        <begin position="80"/>
        <end position="179"/>
    </location>
</feature>
<feature type="region of interest" description="Basic motif" evidence="3">
    <location>
        <begin position="157"/>
        <end position="182"/>
    </location>
</feature>
<feature type="region of interest" description="Leucine-zipper" evidence="3">
    <location>
        <begin position="183"/>
        <end position="211"/>
    </location>
</feature>
<feature type="region of interest" description="Disordered" evidence="4">
    <location>
        <begin position="222"/>
        <end position="276"/>
    </location>
</feature>
<feature type="region of interest" description="Disordered" evidence="4">
    <location>
        <begin position="315"/>
        <end position="338"/>
    </location>
</feature>
<feature type="compositionally biased region" description="Polar residues" evidence="4">
    <location>
        <begin position="13"/>
        <end position="31"/>
    </location>
</feature>
<feature type="compositionally biased region" description="Low complexity" evidence="4">
    <location>
        <begin position="123"/>
        <end position="137"/>
    </location>
</feature>
<feature type="compositionally biased region" description="Pro residues" evidence="4">
    <location>
        <begin position="256"/>
        <end position="265"/>
    </location>
</feature>
<feature type="compositionally biased region" description="Polar residues" evidence="4">
    <location>
        <begin position="266"/>
        <end position="276"/>
    </location>
</feature>
<feature type="modified residue" description="Phosphoserine" evidence="1">
    <location>
        <position position="27"/>
    </location>
</feature>
<feature type="disulfide bond" description="Interchain (with C-279 in JUND)" evidence="2">
    <location>
        <position position="172"/>
    </location>
</feature>
<sequence>MFQAFPGDYDSGSRCSSSPSAESQYLSSVDSFGSPPTAAASQECAGLGEMPGSFVPTVTAITTSQDLQWLVQPTLISSMAQSQGQPLASQPPAVDPYDMPGTSYSTPGLSAYSTGGASGSGGPSTSTSTSGPVSARPARARPRRPREETLTPEEEEKRRVRRERNKLAAAKCRNRRRELTDRLQAETDQLEEEKAELESEIAELQKEKERLEFVLVAHKPGCKIPYEEGPGPGPLAEVRDLPGSTSAKEDGFGWLLPPPPPPPLPFQSSRDAPPNLTASLFTHSEVQVLGDPFPVVSPSYTSSFVLTCPEVSAFAGSQRTSGSEQPSDPLNSPSLLAL</sequence>
<proteinExistence type="evidence at protein level"/>